<organism>
    <name type="scientific">Antirrhinum cirrhigerum</name>
    <name type="common">Snapdragon</name>
    <name type="synonym">Antirrhinum majus subsp. cirrhigerum</name>
    <dbReference type="NCBI Taxonomy" id="102600"/>
    <lineage>
        <taxon>Eukaryota</taxon>
        <taxon>Viridiplantae</taxon>
        <taxon>Streptophyta</taxon>
        <taxon>Embryophyta</taxon>
        <taxon>Tracheophyta</taxon>
        <taxon>Spermatophyta</taxon>
        <taxon>Magnoliopsida</taxon>
        <taxon>eudicotyledons</taxon>
        <taxon>Gunneridae</taxon>
        <taxon>Pentapetalae</taxon>
        <taxon>asterids</taxon>
        <taxon>lamiids</taxon>
        <taxon>Lamiales</taxon>
        <taxon>Plantaginaceae</taxon>
        <taxon>Antirrhineae</taxon>
        <taxon>Antirrhinum</taxon>
    </lineage>
</organism>
<gene>
    <name type="primary">CYC</name>
    <name type="synonym">CYC1A</name>
    <name type="synonym">CYC1B</name>
</gene>
<keyword id="KW-0217">Developmental protein</keyword>
<keyword id="KW-0238">DNA-binding</keyword>
<keyword id="KW-0539">Nucleus</keyword>
<keyword id="KW-0804">Transcription</keyword>
<keyword id="KW-0805">Transcription regulation</keyword>
<reference key="1">
    <citation type="journal article" date="1999" name="Mol. Biol. Evol.">
        <title>Evolution of the cycloidea gene family in Antirrhinum and Misopates.</title>
        <authorList>
            <person name="Vieira C.P."/>
            <person name="Vieira J."/>
            <person name="Charlesworth D."/>
        </authorList>
    </citation>
    <scope>NUCLEOTIDE SEQUENCE [GENOMIC DNA]</scope>
</reference>
<reference key="2">
    <citation type="journal article" date="2003" name="Mol. Biol. Evol.">
        <title>Rapid molecular evolution of CYCLOIDEA-like genes in Antirrhinum and its relatives.</title>
        <authorList>
            <person name="Guebitz T."/>
            <person name="Caldwell A."/>
            <person name="Hudson A."/>
        </authorList>
    </citation>
    <scope>NUCLEOTIDE SEQUENCE [GENOMIC DNA] OF 14-262</scope>
</reference>
<sequence length="271" mass="30348">HLPQVSSSLHSRAATSVVDLNGNEIQLHDMLSGHYLTTANAPVLESTALFNNNNNFNHDVVNGLNRDPSPTFPTKQAVKKDRHSKIYTSQGPRDRRVRLSIGIARKFFDLQEMLGFDKPSKTLDWLLTKSKTAVKELVQSKSTKSNSSSPCDDCEEVVSVESENVTDHSKGKSLKANNKCKEAMDSHQAAAKESRAKARARARERTKEKMCIKQLNEAIVLRNHQFEVSGTREAFVHPVFGFHQQNYGNTSHENWDQSNFASQSNQLCAIL</sequence>
<protein>
    <recommendedName>
        <fullName>Transcription factor CYCLOIDEA</fullName>
    </recommendedName>
</protein>
<evidence type="ECO:0000250" key="1"/>
<evidence type="ECO:0000255" key="2">
    <source>
        <dbReference type="PROSITE-ProRule" id="PRU00701"/>
    </source>
</evidence>
<evidence type="ECO:0000255" key="3">
    <source>
        <dbReference type="PROSITE-ProRule" id="PRU00702"/>
    </source>
</evidence>
<evidence type="ECO:0000256" key="4">
    <source>
        <dbReference type="SAM" id="MobiDB-lite"/>
    </source>
</evidence>
<evidence type="ECO:0000305" key="5"/>
<name>CYCLD_ANTCI</name>
<proteinExistence type="inferred from homology"/>
<accession>Q9SBV9</accession>
<accession>Q7XJG3</accession>
<accession>Q9SBV4</accession>
<accession>Q9SBV5</accession>
<feature type="chain" id="PRO_0000330801" description="Transcription factor CYCLOIDEA">
    <location>
        <begin position="1" status="less than"/>
        <end position="271" status="greater than"/>
    </location>
</feature>
<feature type="domain" description="TCP" evidence="2">
    <location>
        <begin position="79"/>
        <end position="137"/>
    </location>
</feature>
<feature type="domain" description="R" evidence="3">
    <location>
        <begin position="192"/>
        <end position="209"/>
    </location>
</feature>
<feature type="region of interest" description="Disordered" evidence="4">
    <location>
        <begin position="64"/>
        <end position="85"/>
    </location>
</feature>
<feature type="sequence conflict" description="In Ref. 1; AAF07240." evidence="5" ref="1">
    <original>K</original>
    <variation>G</variation>
    <location>
        <position position="85"/>
    </location>
</feature>
<feature type="sequence conflict" description="In Ref. 1; AAF07230." evidence="5" ref="1">
    <original>VK</original>
    <variation>IR</variation>
    <location>
        <begin position="134"/>
        <end position="135"/>
    </location>
</feature>
<feature type="sequence conflict" description="In Ref. 1; AAF07240 and 2; AAP84113." evidence="5" ref="1 2">
    <original>V</original>
    <variation>I</variation>
    <location>
        <position position="134"/>
    </location>
</feature>
<feature type="sequence conflict" description="In Ref. 2; AAP84113." evidence="5" ref="2">
    <original>E</original>
    <variation>D</variation>
    <location>
        <position position="161"/>
    </location>
</feature>
<feature type="sequence conflict" description="In Ref. 1; AAF07240." evidence="5" ref="1">
    <original>C</original>
    <variation>S</variation>
    <location>
        <position position="180"/>
    </location>
</feature>
<feature type="sequence conflict" description="In Ref. 1; AAF07230." evidence="5" ref="1">
    <original>N</original>
    <variation>S</variation>
    <location>
        <position position="216"/>
    </location>
</feature>
<feature type="non-terminal residue">
    <location>
        <position position="1"/>
    </location>
</feature>
<feature type="non-terminal residue">
    <location>
        <position position="271"/>
    </location>
</feature>
<comment type="function">
    <text evidence="1">Involved in the dorsovental asymmetry of flowers. Retards growth rate and reduces organ number in the dorsal region of flowers (By similarity).</text>
</comment>
<comment type="subcellular location">
    <subcellularLocation>
        <location evidence="5">Nucleus</location>
    </subcellularLocation>
</comment>
<dbReference type="EMBL" id="AF146833">
    <property type="protein sequence ID" value="AAF07224.1"/>
    <property type="molecule type" value="Genomic_DNA"/>
</dbReference>
<dbReference type="EMBL" id="AF146839">
    <property type="protein sequence ID" value="AAF07230.1"/>
    <property type="molecule type" value="Genomic_DNA"/>
</dbReference>
<dbReference type="EMBL" id="AF146849">
    <property type="protein sequence ID" value="AAF07240.1"/>
    <property type="molecule type" value="Genomic_DNA"/>
</dbReference>
<dbReference type="EMBL" id="AY316716">
    <property type="protein sequence ID" value="AAP84113.1"/>
    <property type="molecule type" value="Genomic_DNA"/>
</dbReference>
<dbReference type="SMR" id="Q9SBV9"/>
<dbReference type="GO" id="GO:0005634">
    <property type="term" value="C:nucleus"/>
    <property type="evidence" value="ECO:0007669"/>
    <property type="project" value="UniProtKB-SubCell"/>
</dbReference>
<dbReference type="GO" id="GO:0003700">
    <property type="term" value="F:DNA-binding transcription factor activity"/>
    <property type="evidence" value="ECO:0007669"/>
    <property type="project" value="InterPro"/>
</dbReference>
<dbReference type="GO" id="GO:0043565">
    <property type="term" value="F:sequence-specific DNA binding"/>
    <property type="evidence" value="ECO:0007669"/>
    <property type="project" value="TreeGrafter"/>
</dbReference>
<dbReference type="GO" id="GO:2000032">
    <property type="term" value="P:regulation of secondary shoot formation"/>
    <property type="evidence" value="ECO:0007669"/>
    <property type="project" value="TreeGrafter"/>
</dbReference>
<dbReference type="InterPro" id="IPR017888">
    <property type="entry name" value="CYC/TB1_R_domain"/>
</dbReference>
<dbReference type="InterPro" id="IPR017887">
    <property type="entry name" value="TF_TCP_subgr"/>
</dbReference>
<dbReference type="InterPro" id="IPR005333">
    <property type="entry name" value="Transcription_factor_TCP"/>
</dbReference>
<dbReference type="PANTHER" id="PTHR31072:SF224">
    <property type="entry name" value="TRANSCRIPTION FACTOR TCP1"/>
    <property type="match status" value="1"/>
</dbReference>
<dbReference type="PANTHER" id="PTHR31072">
    <property type="entry name" value="TRANSCRIPTION FACTOR TCP4-RELATED"/>
    <property type="match status" value="1"/>
</dbReference>
<dbReference type="Pfam" id="PF03634">
    <property type="entry name" value="TCP"/>
    <property type="match status" value="1"/>
</dbReference>
<dbReference type="PROSITE" id="PS51370">
    <property type="entry name" value="R"/>
    <property type="match status" value="1"/>
</dbReference>
<dbReference type="PROSITE" id="PS51369">
    <property type="entry name" value="TCP"/>
    <property type="match status" value="1"/>
</dbReference>